<dbReference type="EMBL" id="AE000520">
    <property type="protein sequence ID" value="AAC65520.1"/>
    <property type="molecule type" value="Genomic_DNA"/>
</dbReference>
<dbReference type="PIR" id="G71313">
    <property type="entry name" value="G71313"/>
</dbReference>
<dbReference type="RefSeq" id="WP_010881981.1">
    <property type="nucleotide sequence ID" value="NC_021490.2"/>
</dbReference>
<dbReference type="SMR" id="O83545"/>
<dbReference type="STRING" id="243276.TP_0534"/>
<dbReference type="TCDB" id="3.A.2.3.3">
    <property type="family name" value="the h+- or na+-translocating f-type, v-type and a-type atpase (f-atpase) superfamily"/>
</dbReference>
<dbReference type="EnsemblBacteria" id="AAC65520">
    <property type="protein sequence ID" value="AAC65520"/>
    <property type="gene ID" value="TP_0534"/>
</dbReference>
<dbReference type="KEGG" id="tpa:TP_0534"/>
<dbReference type="KEGG" id="tpw:TPANIC_0534"/>
<dbReference type="eggNOG" id="COG1527">
    <property type="taxonomic scope" value="Bacteria"/>
</dbReference>
<dbReference type="HOGENOM" id="CLU_823713_0_0_12"/>
<dbReference type="OrthoDB" id="363307at2"/>
<dbReference type="Proteomes" id="UP000000811">
    <property type="component" value="Chromosome"/>
</dbReference>
<dbReference type="GO" id="GO:0046961">
    <property type="term" value="F:proton-transporting ATPase activity, rotational mechanism"/>
    <property type="evidence" value="ECO:0007669"/>
    <property type="project" value="InterPro"/>
</dbReference>
<dbReference type="InterPro" id="IPR036079">
    <property type="entry name" value="ATPase_csu/dsu_sf"/>
</dbReference>
<dbReference type="InterPro" id="IPR002843">
    <property type="entry name" value="ATPase_V0-cplx_csu/dsu"/>
</dbReference>
<dbReference type="Pfam" id="PF01992">
    <property type="entry name" value="vATP-synt_AC39"/>
    <property type="match status" value="1"/>
</dbReference>
<dbReference type="SUPFAM" id="SSF103486">
    <property type="entry name" value="V-type ATP synthase subunit C"/>
    <property type="match status" value="1"/>
</dbReference>
<sequence>MAVERDVADVFVYAKLSGLCARLWVGERLGTLQGVGTLCDLWVRLFSEPAPRSAGAHLVGLIQRRVEACLLRDCVRAASCYQEPPSLFSALLARYDYLYLKTLSSSESQAGFRVCQPPDLGRFSLFRWEKWPCIEAVTRGSPVSWYNRVPRSDERVLWDLRLDQSYYHALWQTLCSIPEDDRTACSRLVREEVALYAVGWVLRLRMFYGVQKKDAPSELSSNGAIRRCLGTWWKCILFAWDCSLTERGAWSGWRYERFLNNPVDGVQWEPDLDAFERAGSRFLYCLARTVFHAQLFTPATIVAFFMMKRFEARGICALAECIHAGSARTLPREFLGEAAYV</sequence>
<keyword id="KW-1185">Reference proteome</keyword>
<feature type="chain" id="PRO_0000202270" description="Uncharacterized protein TP_0534">
    <location>
        <begin position="1"/>
        <end position="341"/>
    </location>
</feature>
<protein>
    <recommendedName>
        <fullName>Uncharacterized protein TP_0534</fullName>
    </recommendedName>
</protein>
<proteinExistence type="predicted"/>
<gene>
    <name type="ordered locus">TP_0534</name>
</gene>
<accession>O83545</accession>
<reference key="1">
    <citation type="journal article" date="1998" name="Science">
        <title>Complete genome sequence of Treponema pallidum, the syphilis spirochete.</title>
        <authorList>
            <person name="Fraser C.M."/>
            <person name="Norris S.J."/>
            <person name="Weinstock G.M."/>
            <person name="White O."/>
            <person name="Sutton G.G."/>
            <person name="Dodson R.J."/>
            <person name="Gwinn M.L."/>
            <person name="Hickey E.K."/>
            <person name="Clayton R.A."/>
            <person name="Ketchum K.A."/>
            <person name="Sodergren E."/>
            <person name="Hardham J.M."/>
            <person name="McLeod M.P."/>
            <person name="Salzberg S.L."/>
            <person name="Peterson J.D."/>
            <person name="Khalak H.G."/>
            <person name="Richardson D.L."/>
            <person name="Howell J.K."/>
            <person name="Chidambaram M."/>
            <person name="Utterback T.R."/>
            <person name="McDonald L.A."/>
            <person name="Artiach P."/>
            <person name="Bowman C."/>
            <person name="Cotton M.D."/>
            <person name="Fujii C."/>
            <person name="Garland S.A."/>
            <person name="Hatch B."/>
            <person name="Horst K."/>
            <person name="Roberts K.M."/>
            <person name="Sandusky M."/>
            <person name="Weidman J.F."/>
            <person name="Smith H.O."/>
            <person name="Venter J.C."/>
        </authorList>
    </citation>
    <scope>NUCLEOTIDE SEQUENCE [LARGE SCALE GENOMIC DNA]</scope>
    <source>
        <strain>Nichols</strain>
    </source>
</reference>
<name>Y534_TREPA</name>
<organism>
    <name type="scientific">Treponema pallidum (strain Nichols)</name>
    <dbReference type="NCBI Taxonomy" id="243276"/>
    <lineage>
        <taxon>Bacteria</taxon>
        <taxon>Pseudomonadati</taxon>
        <taxon>Spirochaetota</taxon>
        <taxon>Spirochaetia</taxon>
        <taxon>Spirochaetales</taxon>
        <taxon>Treponemataceae</taxon>
        <taxon>Treponema</taxon>
    </lineage>
</organism>